<keyword id="KW-1185">Reference proteome</keyword>
<keyword id="KW-0678">Repressor</keyword>
<keyword id="KW-0687">Ribonucleoprotein</keyword>
<keyword id="KW-0689">Ribosomal protein</keyword>
<keyword id="KW-0694">RNA-binding</keyword>
<keyword id="KW-0699">rRNA-binding</keyword>
<keyword id="KW-0810">Translation regulation</keyword>
<keyword id="KW-0820">tRNA-binding</keyword>
<gene>
    <name evidence="1" type="primary">rplA</name>
    <name type="ordered locus">LI0932</name>
</gene>
<sequence>MPKLGKKYRNAVKGVDLSLHLSFEDAVTQSIQTSFANFDETVDIAIGLGVDPKYSDQMVRGAVTLPYGLGKTVRVAVFCKGEKEAEAKEAGADYAGAEELVAKIKDGWLDFDAAVATPDVMALVGQVGRQLGPRGLMPNAKTGTVTFNVTNAIKELKAGRIDFKVDKAGVLHAPLGKVSFGSEKILGNLKSLVETVNRLKPSSAKGTYIKSMAISTTMGPGFKIDTNLVKKFLES</sequence>
<proteinExistence type="inferred from homology"/>
<comment type="function">
    <text evidence="1">Binds directly to 23S rRNA. The L1 stalk is quite mobile in the ribosome, and is involved in E site tRNA release.</text>
</comment>
<comment type="function">
    <text evidence="1">Protein L1 is also a translational repressor protein, it controls the translation of the L11 operon by binding to its mRNA.</text>
</comment>
<comment type="subunit">
    <text evidence="1">Part of the 50S ribosomal subunit.</text>
</comment>
<comment type="similarity">
    <text evidence="1">Belongs to the universal ribosomal protein uL1 family.</text>
</comment>
<dbReference type="EMBL" id="AM180252">
    <property type="protein sequence ID" value="CAJ54986.1"/>
    <property type="molecule type" value="Genomic_DNA"/>
</dbReference>
<dbReference type="RefSeq" id="WP_011527015.1">
    <property type="nucleotide sequence ID" value="NC_008011.1"/>
</dbReference>
<dbReference type="SMR" id="Q1MPU1"/>
<dbReference type="STRING" id="363253.LI0932"/>
<dbReference type="KEGG" id="lip:LI0932"/>
<dbReference type="eggNOG" id="COG0081">
    <property type="taxonomic scope" value="Bacteria"/>
</dbReference>
<dbReference type="HOGENOM" id="CLU_062853_0_0_7"/>
<dbReference type="OrthoDB" id="9803740at2"/>
<dbReference type="Proteomes" id="UP000002430">
    <property type="component" value="Chromosome"/>
</dbReference>
<dbReference type="GO" id="GO:0015934">
    <property type="term" value="C:large ribosomal subunit"/>
    <property type="evidence" value="ECO:0007669"/>
    <property type="project" value="InterPro"/>
</dbReference>
<dbReference type="GO" id="GO:0019843">
    <property type="term" value="F:rRNA binding"/>
    <property type="evidence" value="ECO:0007669"/>
    <property type="project" value="UniProtKB-UniRule"/>
</dbReference>
<dbReference type="GO" id="GO:0003735">
    <property type="term" value="F:structural constituent of ribosome"/>
    <property type="evidence" value="ECO:0007669"/>
    <property type="project" value="InterPro"/>
</dbReference>
<dbReference type="GO" id="GO:0000049">
    <property type="term" value="F:tRNA binding"/>
    <property type="evidence" value="ECO:0007669"/>
    <property type="project" value="UniProtKB-KW"/>
</dbReference>
<dbReference type="GO" id="GO:0006417">
    <property type="term" value="P:regulation of translation"/>
    <property type="evidence" value="ECO:0007669"/>
    <property type="project" value="UniProtKB-KW"/>
</dbReference>
<dbReference type="GO" id="GO:0006412">
    <property type="term" value="P:translation"/>
    <property type="evidence" value="ECO:0007669"/>
    <property type="project" value="UniProtKB-UniRule"/>
</dbReference>
<dbReference type="CDD" id="cd00403">
    <property type="entry name" value="Ribosomal_L1"/>
    <property type="match status" value="1"/>
</dbReference>
<dbReference type="FunFam" id="3.40.50.790:FF:000001">
    <property type="entry name" value="50S ribosomal protein L1"/>
    <property type="match status" value="1"/>
</dbReference>
<dbReference type="Gene3D" id="3.30.190.20">
    <property type="match status" value="1"/>
</dbReference>
<dbReference type="Gene3D" id="3.40.50.790">
    <property type="match status" value="1"/>
</dbReference>
<dbReference type="HAMAP" id="MF_01318_B">
    <property type="entry name" value="Ribosomal_uL1_B"/>
    <property type="match status" value="1"/>
</dbReference>
<dbReference type="InterPro" id="IPR005878">
    <property type="entry name" value="Ribosom_uL1_bac-type"/>
</dbReference>
<dbReference type="InterPro" id="IPR002143">
    <property type="entry name" value="Ribosomal_uL1"/>
</dbReference>
<dbReference type="InterPro" id="IPR023674">
    <property type="entry name" value="Ribosomal_uL1-like"/>
</dbReference>
<dbReference type="InterPro" id="IPR028364">
    <property type="entry name" value="Ribosomal_uL1/biogenesis"/>
</dbReference>
<dbReference type="InterPro" id="IPR016095">
    <property type="entry name" value="Ribosomal_uL1_3-a/b-sand"/>
</dbReference>
<dbReference type="InterPro" id="IPR023673">
    <property type="entry name" value="Ribosomal_uL1_CS"/>
</dbReference>
<dbReference type="NCBIfam" id="TIGR01169">
    <property type="entry name" value="rplA_bact"/>
    <property type="match status" value="1"/>
</dbReference>
<dbReference type="PANTHER" id="PTHR36427">
    <property type="entry name" value="54S RIBOSOMAL PROTEIN L1, MITOCHONDRIAL"/>
    <property type="match status" value="1"/>
</dbReference>
<dbReference type="PANTHER" id="PTHR36427:SF3">
    <property type="entry name" value="LARGE RIBOSOMAL SUBUNIT PROTEIN UL1M"/>
    <property type="match status" value="1"/>
</dbReference>
<dbReference type="Pfam" id="PF00687">
    <property type="entry name" value="Ribosomal_L1"/>
    <property type="match status" value="1"/>
</dbReference>
<dbReference type="PIRSF" id="PIRSF002155">
    <property type="entry name" value="Ribosomal_L1"/>
    <property type="match status" value="1"/>
</dbReference>
<dbReference type="SUPFAM" id="SSF56808">
    <property type="entry name" value="Ribosomal protein L1"/>
    <property type="match status" value="1"/>
</dbReference>
<dbReference type="PROSITE" id="PS01199">
    <property type="entry name" value="RIBOSOMAL_L1"/>
    <property type="match status" value="1"/>
</dbReference>
<name>RL1_LAWIP</name>
<organism>
    <name type="scientific">Lawsonia intracellularis (strain PHE/MN1-00)</name>
    <dbReference type="NCBI Taxonomy" id="363253"/>
    <lineage>
        <taxon>Bacteria</taxon>
        <taxon>Pseudomonadati</taxon>
        <taxon>Thermodesulfobacteriota</taxon>
        <taxon>Desulfovibrionia</taxon>
        <taxon>Desulfovibrionales</taxon>
        <taxon>Desulfovibrionaceae</taxon>
        <taxon>Lawsonia</taxon>
    </lineage>
</organism>
<reference key="1">
    <citation type="submission" date="2005-11" db="EMBL/GenBank/DDBJ databases">
        <title>The complete genome sequence of Lawsonia intracellularis: the causative agent of proliferative enteropathy.</title>
        <authorList>
            <person name="Kaur K."/>
            <person name="Zhang Q."/>
            <person name="Beckler D."/>
            <person name="Munir S."/>
            <person name="Li L."/>
            <person name="Kinsley K."/>
            <person name="Herron L."/>
            <person name="Peterson A."/>
            <person name="May B."/>
            <person name="Singh S."/>
            <person name="Gebhart C."/>
            <person name="Kapur V."/>
        </authorList>
    </citation>
    <scope>NUCLEOTIDE SEQUENCE [LARGE SCALE GENOMIC DNA]</scope>
    <source>
        <strain>PHE/MN1-00</strain>
    </source>
</reference>
<accession>Q1MPU1</accession>
<evidence type="ECO:0000255" key="1">
    <source>
        <dbReference type="HAMAP-Rule" id="MF_01318"/>
    </source>
</evidence>
<evidence type="ECO:0000305" key="2"/>
<protein>
    <recommendedName>
        <fullName evidence="1">Large ribosomal subunit protein uL1</fullName>
    </recommendedName>
    <alternativeName>
        <fullName evidence="2">50S ribosomal protein L1</fullName>
    </alternativeName>
</protein>
<feature type="chain" id="PRO_0000308035" description="Large ribosomal subunit protein uL1">
    <location>
        <begin position="1"/>
        <end position="235"/>
    </location>
</feature>